<organism>
    <name type="scientific">Yersinia pestis</name>
    <dbReference type="NCBI Taxonomy" id="632"/>
    <lineage>
        <taxon>Bacteria</taxon>
        <taxon>Pseudomonadati</taxon>
        <taxon>Pseudomonadota</taxon>
        <taxon>Gammaproteobacteria</taxon>
        <taxon>Enterobacterales</taxon>
        <taxon>Yersiniaceae</taxon>
        <taxon>Yersinia</taxon>
    </lineage>
</organism>
<evidence type="ECO:0000255" key="1">
    <source>
        <dbReference type="HAMAP-Rule" id="MF_00141"/>
    </source>
</evidence>
<evidence type="ECO:0000305" key="2"/>
<keyword id="KW-0963">Cytoplasm</keyword>
<keyword id="KW-0251">Elongation factor</keyword>
<keyword id="KW-0379">Hydroxylation</keyword>
<keyword id="KW-0648">Protein biosynthesis</keyword>
<keyword id="KW-1185">Reference proteome</keyword>
<comment type="function">
    <text evidence="1">Involved in peptide bond synthesis. Alleviates ribosome stalling that occurs when 3 or more consecutive Pro residues or the sequence PPG is present in a protein, possibly by augmenting the peptidyl transferase activity of the ribosome. Modification of Lys-34 is required for alleviation.</text>
</comment>
<comment type="pathway">
    <text evidence="1">Protein biosynthesis; polypeptide chain elongation.</text>
</comment>
<comment type="subcellular location">
    <subcellularLocation>
        <location evidence="1">Cytoplasm</location>
    </subcellularLocation>
</comment>
<comment type="PTM">
    <text evidence="1">May be beta-lysylated on the epsilon-amino group of Lys-34 by the combined action of EpmA and EpmB, and then hydroxylated on the C5 position of the same residue by EpmC (if this protein is present). Lysylation is critical for the stimulatory effect of EF-P on peptide-bond formation. The lysylation moiety may extend toward the peptidyltransferase center and stabilize the terminal 3-CCA end of the tRNA. Hydroxylation of the C5 position on Lys-34 may allow additional potential stabilizing hydrogen-bond interactions with the P-tRNA.</text>
</comment>
<comment type="similarity">
    <text evidence="1">Belongs to the elongation factor P family.</text>
</comment>
<comment type="sequence caution" evidence="2">
    <conflict type="erroneous initiation">
        <sequence resource="EMBL-CDS" id="AAS60780"/>
    </conflict>
    <text>Extended N-terminus.</text>
</comment>
<dbReference type="EMBL" id="AL590842">
    <property type="protein sequence ID" value="CAL19036.1"/>
    <property type="molecule type" value="Genomic_DNA"/>
</dbReference>
<dbReference type="EMBL" id="AE009952">
    <property type="protein sequence ID" value="AAM84200.1"/>
    <property type="molecule type" value="Genomic_DNA"/>
</dbReference>
<dbReference type="EMBL" id="AE017042">
    <property type="protein sequence ID" value="AAS60780.1"/>
    <property type="status" value="ALT_INIT"/>
    <property type="molecule type" value="Genomic_DNA"/>
</dbReference>
<dbReference type="PIR" id="AB0044">
    <property type="entry name" value="AB0044"/>
</dbReference>
<dbReference type="RefSeq" id="WP_002209131.1">
    <property type="nucleotide sequence ID" value="NZ_WUCM01000014.1"/>
</dbReference>
<dbReference type="RefSeq" id="YP_002345432.1">
    <property type="nucleotide sequence ID" value="NC_003143.1"/>
</dbReference>
<dbReference type="SMR" id="Q8ZIY0"/>
<dbReference type="STRING" id="214092.YPO0354"/>
<dbReference type="PaxDb" id="214092-YPO0354"/>
<dbReference type="DNASU" id="1145559"/>
<dbReference type="EnsemblBacteria" id="AAS60780">
    <property type="protein sequence ID" value="AAS60780"/>
    <property type="gene ID" value="YP_0510"/>
</dbReference>
<dbReference type="GeneID" id="57974254"/>
<dbReference type="KEGG" id="ype:YPO0354"/>
<dbReference type="KEGG" id="ypk:y0612"/>
<dbReference type="KEGG" id="ypm:YP_0510"/>
<dbReference type="PATRIC" id="fig|214092.21.peg.590"/>
<dbReference type="eggNOG" id="COG0231">
    <property type="taxonomic scope" value="Bacteria"/>
</dbReference>
<dbReference type="HOGENOM" id="CLU_074944_0_0_6"/>
<dbReference type="OMA" id="WSVVEFQ"/>
<dbReference type="OrthoDB" id="9801844at2"/>
<dbReference type="UniPathway" id="UPA00345"/>
<dbReference type="Proteomes" id="UP000000815">
    <property type="component" value="Chromosome"/>
</dbReference>
<dbReference type="Proteomes" id="UP000001019">
    <property type="component" value="Chromosome"/>
</dbReference>
<dbReference type="Proteomes" id="UP000002490">
    <property type="component" value="Chromosome"/>
</dbReference>
<dbReference type="GO" id="GO:0005737">
    <property type="term" value="C:cytoplasm"/>
    <property type="evidence" value="ECO:0000318"/>
    <property type="project" value="GO_Central"/>
</dbReference>
<dbReference type="GO" id="GO:0003746">
    <property type="term" value="F:translation elongation factor activity"/>
    <property type="evidence" value="ECO:0000318"/>
    <property type="project" value="GO_Central"/>
</dbReference>
<dbReference type="GO" id="GO:0043043">
    <property type="term" value="P:peptide biosynthetic process"/>
    <property type="evidence" value="ECO:0007669"/>
    <property type="project" value="InterPro"/>
</dbReference>
<dbReference type="CDD" id="cd04470">
    <property type="entry name" value="S1_EF-P_repeat_1"/>
    <property type="match status" value="1"/>
</dbReference>
<dbReference type="CDD" id="cd05794">
    <property type="entry name" value="S1_EF-P_repeat_2"/>
    <property type="match status" value="1"/>
</dbReference>
<dbReference type="FunFam" id="2.30.30.30:FF:000003">
    <property type="entry name" value="Elongation factor P"/>
    <property type="match status" value="1"/>
</dbReference>
<dbReference type="FunFam" id="2.40.50.140:FF:000004">
    <property type="entry name" value="Elongation factor P"/>
    <property type="match status" value="1"/>
</dbReference>
<dbReference type="FunFam" id="2.40.50.140:FF:000009">
    <property type="entry name" value="Elongation factor P"/>
    <property type="match status" value="1"/>
</dbReference>
<dbReference type="Gene3D" id="2.30.30.30">
    <property type="match status" value="1"/>
</dbReference>
<dbReference type="Gene3D" id="2.40.50.140">
    <property type="entry name" value="Nucleic acid-binding proteins"/>
    <property type="match status" value="2"/>
</dbReference>
<dbReference type="HAMAP" id="MF_00141">
    <property type="entry name" value="EF_P"/>
    <property type="match status" value="1"/>
</dbReference>
<dbReference type="InterPro" id="IPR015365">
    <property type="entry name" value="Elong-fact-P_C"/>
</dbReference>
<dbReference type="InterPro" id="IPR012340">
    <property type="entry name" value="NA-bd_OB-fold"/>
</dbReference>
<dbReference type="InterPro" id="IPR014722">
    <property type="entry name" value="Rib_uL2_dom2"/>
</dbReference>
<dbReference type="InterPro" id="IPR020599">
    <property type="entry name" value="Transl_elong_fac_P/YeiP"/>
</dbReference>
<dbReference type="InterPro" id="IPR013185">
    <property type="entry name" value="Transl_elong_KOW-like"/>
</dbReference>
<dbReference type="InterPro" id="IPR001059">
    <property type="entry name" value="Transl_elong_P/YeiP_cen"/>
</dbReference>
<dbReference type="InterPro" id="IPR013852">
    <property type="entry name" value="Transl_elong_P/YeiP_CS"/>
</dbReference>
<dbReference type="InterPro" id="IPR011768">
    <property type="entry name" value="Transl_elongation_fac_P"/>
</dbReference>
<dbReference type="InterPro" id="IPR008991">
    <property type="entry name" value="Translation_prot_SH3-like_sf"/>
</dbReference>
<dbReference type="NCBIfam" id="TIGR00038">
    <property type="entry name" value="efp"/>
    <property type="match status" value="1"/>
</dbReference>
<dbReference type="NCBIfam" id="NF001810">
    <property type="entry name" value="PRK00529.1"/>
    <property type="match status" value="1"/>
</dbReference>
<dbReference type="PANTHER" id="PTHR30053">
    <property type="entry name" value="ELONGATION FACTOR P"/>
    <property type="match status" value="1"/>
</dbReference>
<dbReference type="PANTHER" id="PTHR30053:SF12">
    <property type="entry name" value="ELONGATION FACTOR P (EF-P) FAMILY PROTEIN"/>
    <property type="match status" value="1"/>
</dbReference>
<dbReference type="Pfam" id="PF01132">
    <property type="entry name" value="EFP"/>
    <property type="match status" value="1"/>
</dbReference>
<dbReference type="Pfam" id="PF08207">
    <property type="entry name" value="EFP_N"/>
    <property type="match status" value="1"/>
</dbReference>
<dbReference type="Pfam" id="PF09285">
    <property type="entry name" value="Elong-fact-P_C"/>
    <property type="match status" value="1"/>
</dbReference>
<dbReference type="PIRSF" id="PIRSF005901">
    <property type="entry name" value="EF-P"/>
    <property type="match status" value="1"/>
</dbReference>
<dbReference type="SMART" id="SM01185">
    <property type="entry name" value="EFP"/>
    <property type="match status" value="1"/>
</dbReference>
<dbReference type="SMART" id="SM00841">
    <property type="entry name" value="Elong-fact-P_C"/>
    <property type="match status" value="1"/>
</dbReference>
<dbReference type="SUPFAM" id="SSF50249">
    <property type="entry name" value="Nucleic acid-binding proteins"/>
    <property type="match status" value="2"/>
</dbReference>
<dbReference type="SUPFAM" id="SSF50104">
    <property type="entry name" value="Translation proteins SH3-like domain"/>
    <property type="match status" value="1"/>
</dbReference>
<dbReference type="PROSITE" id="PS01275">
    <property type="entry name" value="EFP"/>
    <property type="match status" value="1"/>
</dbReference>
<reference key="1">
    <citation type="journal article" date="2001" name="Nature">
        <title>Genome sequence of Yersinia pestis, the causative agent of plague.</title>
        <authorList>
            <person name="Parkhill J."/>
            <person name="Wren B.W."/>
            <person name="Thomson N.R."/>
            <person name="Titball R.W."/>
            <person name="Holden M.T.G."/>
            <person name="Prentice M.B."/>
            <person name="Sebaihia M."/>
            <person name="James K.D."/>
            <person name="Churcher C.M."/>
            <person name="Mungall K.L."/>
            <person name="Baker S."/>
            <person name="Basham D."/>
            <person name="Bentley S.D."/>
            <person name="Brooks K."/>
            <person name="Cerdeno-Tarraga A.-M."/>
            <person name="Chillingworth T."/>
            <person name="Cronin A."/>
            <person name="Davies R.M."/>
            <person name="Davis P."/>
            <person name="Dougan G."/>
            <person name="Feltwell T."/>
            <person name="Hamlin N."/>
            <person name="Holroyd S."/>
            <person name="Jagels K."/>
            <person name="Karlyshev A.V."/>
            <person name="Leather S."/>
            <person name="Moule S."/>
            <person name="Oyston P.C.F."/>
            <person name="Quail M.A."/>
            <person name="Rutherford K.M."/>
            <person name="Simmonds M."/>
            <person name="Skelton J."/>
            <person name="Stevens K."/>
            <person name="Whitehead S."/>
            <person name="Barrell B.G."/>
        </authorList>
    </citation>
    <scope>NUCLEOTIDE SEQUENCE [LARGE SCALE GENOMIC DNA]</scope>
    <source>
        <strain>CO-92 / Biovar Orientalis</strain>
    </source>
</reference>
<reference key="2">
    <citation type="journal article" date="2002" name="J. Bacteriol.">
        <title>Genome sequence of Yersinia pestis KIM.</title>
        <authorList>
            <person name="Deng W."/>
            <person name="Burland V."/>
            <person name="Plunkett G. III"/>
            <person name="Boutin A."/>
            <person name="Mayhew G.F."/>
            <person name="Liss P."/>
            <person name="Perna N.T."/>
            <person name="Rose D.J."/>
            <person name="Mau B."/>
            <person name="Zhou S."/>
            <person name="Schwartz D.C."/>
            <person name="Fetherston J.D."/>
            <person name="Lindler L.E."/>
            <person name="Brubaker R.R."/>
            <person name="Plano G.V."/>
            <person name="Straley S.C."/>
            <person name="McDonough K.A."/>
            <person name="Nilles M.L."/>
            <person name="Matson J.S."/>
            <person name="Blattner F.R."/>
            <person name="Perry R.D."/>
        </authorList>
    </citation>
    <scope>NUCLEOTIDE SEQUENCE [LARGE SCALE GENOMIC DNA]</scope>
    <source>
        <strain>KIM10+ / Biovar Mediaevalis</strain>
    </source>
</reference>
<reference key="3">
    <citation type="journal article" date="2004" name="DNA Res.">
        <title>Complete genome sequence of Yersinia pestis strain 91001, an isolate avirulent to humans.</title>
        <authorList>
            <person name="Song Y."/>
            <person name="Tong Z."/>
            <person name="Wang J."/>
            <person name="Wang L."/>
            <person name="Guo Z."/>
            <person name="Han Y."/>
            <person name="Zhang J."/>
            <person name="Pei D."/>
            <person name="Zhou D."/>
            <person name="Qin H."/>
            <person name="Pang X."/>
            <person name="Han Y."/>
            <person name="Zhai J."/>
            <person name="Li M."/>
            <person name="Cui B."/>
            <person name="Qi Z."/>
            <person name="Jin L."/>
            <person name="Dai R."/>
            <person name="Chen F."/>
            <person name="Li S."/>
            <person name="Ye C."/>
            <person name="Du Z."/>
            <person name="Lin W."/>
            <person name="Wang J."/>
            <person name="Yu J."/>
            <person name="Yang H."/>
            <person name="Wang J."/>
            <person name="Huang P."/>
            <person name="Yang R."/>
        </authorList>
    </citation>
    <scope>NUCLEOTIDE SEQUENCE [LARGE SCALE GENOMIC DNA]</scope>
    <source>
        <strain>91001 / Biovar Mediaevalis</strain>
    </source>
</reference>
<sequence length="188" mass="20711">MASYYSNDFRPGLKIMFEGEPYAVESSEFVKPGKGQAFARVKMRRLLTGGRVEKTFKSTDSLEGADVNDMNLTYLYNDGEFWHFMNNETYEQLQADAKAVGDNGKWLIDQAECIVTLWNGQPIAVTPPNFVELEIVDTDPGLKGDTAGTGGKPATLSTGAVVKVPLFVQVGEIIKVDTRSGEYVSRVK</sequence>
<gene>
    <name evidence="1" type="primary">efp</name>
    <name type="ordered locus">YPO0354</name>
    <name type="ordered locus">y0612</name>
    <name type="ordered locus">YP_0510</name>
</gene>
<protein>
    <recommendedName>
        <fullName evidence="1">Elongation factor P</fullName>
        <shortName evidence="1">EF-P</shortName>
    </recommendedName>
</protein>
<proteinExistence type="inferred from homology"/>
<name>EFP_YERPE</name>
<feature type="chain" id="PRO_0000094376" description="Elongation factor P">
    <location>
        <begin position="1"/>
        <end position="188"/>
    </location>
</feature>
<feature type="modified residue" description="N6-(3,6-diaminohexanoyl)-5-hydroxylysine" evidence="1">
    <location>
        <position position="34"/>
    </location>
</feature>
<accession>Q8ZIY0</accession>
<accession>Q0WJV6</accession>